<evidence type="ECO:0000250" key="1"/>
<evidence type="ECO:0000255" key="2">
    <source>
        <dbReference type="PROSITE-ProRule" id="PRU00042"/>
    </source>
</evidence>
<evidence type="ECO:0000255" key="3">
    <source>
        <dbReference type="PROSITE-ProRule" id="PRU00092"/>
    </source>
</evidence>
<evidence type="ECO:0000255" key="4">
    <source>
        <dbReference type="PROSITE-ProRule" id="PRU00176"/>
    </source>
</evidence>
<evidence type="ECO:0000255" key="5">
    <source>
        <dbReference type="PROSITE-ProRule" id="PRU00322"/>
    </source>
</evidence>
<evidence type="ECO:0000256" key="6">
    <source>
        <dbReference type="SAM" id="MobiDB-lite"/>
    </source>
</evidence>
<evidence type="ECO:0000305" key="7"/>
<sequence length="838" mass="94499">MGSDKRVSRSERSGRYGSAFDRDDRDDRDTRSRRRDSEYKRYRDERSSERYDDYRDYDSPERDRMRDRERRNSDRSEDGYHSDGDYMDHDYRQDYYMDEKESKTIMLRGLPININENDIRELVESFEGPQPADVRLMKRKTGLSRGFAFVEFYHLQDATRWMEANQKKLVIQGKTIAMHYSNPRPKFEDWLCNKCGLYNFRRRLKCFRCGAAKAESDLEAPSGSSDAPQSTDYYSDSGYVSSAIILRNIGPHTVVDSILSALAPYVSLVVSNIRLIKDKQTQQNRGFAFVQLPSTLEASQLLQILQTLHPPLKIDGKTVGVDFAKSARKDLVLPDGHRVSAFSVASTAIAAAQWSSTQQAQQSGEGGEYAYLQPGQEGYANYGQCSQDYQPFYQAQTGAAEQSTAPQAEGSAPVPATTSAVVCQSPQMYQQPGSPTQSGTSTAANTTPASTTSTTEEAAPPNAVIPGVKYSVPDTSTYQYDESSGYYYDPQTGLYYDPNSQYYYNSLTQQYLYWDGEKQTYLPAADGAGQSGAQPNGANAGSSKEGKEKKEKPKSKTAQQIAKDMERWAKSLNKQKENFKNSFQPLSARDEERKESAAADAGFALFEKKQGALLERQFMPDMMMMVNTEEEEKPPNKALVAAYSGDSDNEEESERLLGAVDEEKLLDWKKLACLLCRRQFPNKDALTRHQQLSDLHKQNLEVYRRSKMSEQELEALELKEREAKYRDRAAERREKYGIPEPPEPKRKRFDPTVVNYEQPTKDGIDNSNIGNKMLQAMGWKEGSGLGRKSQGITAPIQAQVRMRGAGLGAKGSSYGVNTSDSYKDAVRKAMFARFSEME</sequence>
<gene>
    <name type="primary">rbm5</name>
    <name type="ORF">TGas113j08.1</name>
</gene>
<keyword id="KW-0479">Metal-binding</keyword>
<keyword id="KW-0507">mRNA processing</keyword>
<keyword id="KW-0508">mRNA splicing</keyword>
<keyword id="KW-0539">Nucleus</keyword>
<keyword id="KW-1185">Reference proteome</keyword>
<keyword id="KW-0677">Repeat</keyword>
<keyword id="KW-0694">RNA-binding</keyword>
<keyword id="KW-0747">Spliceosome</keyword>
<keyword id="KW-0862">Zinc</keyword>
<keyword id="KW-0863">Zinc-finger</keyword>
<proteinExistence type="evidence at transcript level"/>
<reference key="1">
    <citation type="submission" date="2006-10" db="EMBL/GenBank/DDBJ databases">
        <authorList>
            <consortium name="Sanger Xenopus tropicalis EST/cDNA project"/>
        </authorList>
    </citation>
    <scope>NUCLEOTIDE SEQUENCE [LARGE SCALE MRNA]</scope>
    <source>
        <tissue>Gastrula</tissue>
    </source>
</reference>
<reference key="2">
    <citation type="submission" date="2007-03" db="EMBL/GenBank/DDBJ databases">
        <authorList>
            <consortium name="NIH - Xenopus Gene Collection (XGC) project"/>
        </authorList>
    </citation>
    <scope>NUCLEOTIDE SEQUENCE [LARGE SCALE MRNA]</scope>
    <source>
        <tissue>Embryo</tissue>
    </source>
</reference>
<accession>A4IGK4</accession>
<accession>Q28D22</accession>
<name>RBM5_XENTR</name>
<protein>
    <recommendedName>
        <fullName>RNA-binding protein 5</fullName>
    </recommendedName>
    <alternativeName>
        <fullName>RNA-binding motif protein 5</fullName>
    </alternativeName>
</protein>
<comment type="function">
    <text evidence="1">Component of the spliceosome A complex. Regulates alternative splicing of a number of mRNAs. May modulate splice site pairing after recruitment of the U1 and U2 snRNPs to the 5' and 3' splice sites of the intron (By similarity).</text>
</comment>
<comment type="subunit">
    <text evidence="1">Component of the spliceosome A complex (also known as the prespliceosome). Appears to dissociate from the spliceosome upon formation of the spliceosome B complex (also known as the precatalytic spliceosome), in which the heterotrimeric U4/U6.U5 snRNPs are bound (By similarity).</text>
</comment>
<comment type="subcellular location">
    <subcellularLocation>
        <location evidence="1">Nucleus</location>
    </subcellularLocation>
</comment>
<comment type="similarity">
    <text evidence="7">Belongs to the RBM5/RBM10 family.</text>
</comment>
<feature type="chain" id="PRO_0000376808" description="RNA-binding protein 5">
    <location>
        <begin position="1"/>
        <end position="838"/>
    </location>
</feature>
<feature type="domain" description="RRM 1" evidence="4">
    <location>
        <begin position="103"/>
        <end position="183"/>
    </location>
</feature>
<feature type="domain" description="RRM 2" evidence="4">
    <location>
        <begin position="242"/>
        <end position="326"/>
    </location>
</feature>
<feature type="domain" description="G-patch" evidence="3">
    <location>
        <begin position="766"/>
        <end position="812"/>
    </location>
</feature>
<feature type="zinc finger region" description="RanBP2-type" evidence="5">
    <location>
        <begin position="186"/>
        <end position="215"/>
    </location>
</feature>
<feature type="zinc finger region" description="C2H2-type" evidence="2">
    <location>
        <begin position="671"/>
        <end position="696"/>
    </location>
</feature>
<feature type="region of interest" description="Disordered" evidence="6">
    <location>
        <begin position="1"/>
        <end position="86"/>
    </location>
</feature>
<feature type="region of interest" description="Disordered" evidence="6">
    <location>
        <begin position="396"/>
        <end position="473"/>
    </location>
</feature>
<feature type="region of interest" description="Disordered" evidence="6">
    <location>
        <begin position="524"/>
        <end position="561"/>
    </location>
</feature>
<feature type="compositionally biased region" description="Polar residues" evidence="6">
    <location>
        <begin position="396"/>
        <end position="406"/>
    </location>
</feature>
<feature type="compositionally biased region" description="Polar residues" evidence="6">
    <location>
        <begin position="416"/>
        <end position="439"/>
    </location>
</feature>
<feature type="compositionally biased region" description="Low complexity" evidence="6">
    <location>
        <begin position="440"/>
        <end position="462"/>
    </location>
</feature>
<feature type="compositionally biased region" description="Polar residues" evidence="6">
    <location>
        <begin position="531"/>
        <end position="540"/>
    </location>
</feature>
<feature type="sequence conflict" description="In Ref. 1; CAJ81574." evidence="7" ref="1">
    <original>C</original>
    <variation>S</variation>
    <location>
        <position position="192"/>
    </location>
</feature>
<feature type="sequence conflict" description="In Ref. 1; CAJ81574." evidence="7" ref="1">
    <original>SGYVSSA</original>
    <variation>T</variation>
    <location>
        <begin position="237"/>
        <end position="243"/>
    </location>
</feature>
<feature type="sequence conflict" description="In Ref. 1; CAJ81574." evidence="7" ref="1">
    <location>
        <position position="610"/>
    </location>
</feature>
<feature type="sequence conflict" description="In Ref. 1; CAJ81574." evidence="7" ref="1">
    <original>A</original>
    <variation>V</variation>
    <location>
        <position position="659"/>
    </location>
</feature>
<dbReference type="EMBL" id="CR855749">
    <property type="protein sequence ID" value="CAJ81574.1"/>
    <property type="molecule type" value="mRNA"/>
</dbReference>
<dbReference type="EMBL" id="BC135140">
    <property type="protein sequence ID" value="AAI35141.1"/>
    <property type="molecule type" value="mRNA"/>
</dbReference>
<dbReference type="RefSeq" id="NP_001017278.1">
    <property type="nucleotide sequence ID" value="NM_001017278.2"/>
</dbReference>
<dbReference type="RefSeq" id="XP_012820244.1">
    <property type="nucleotide sequence ID" value="XM_012964790.3"/>
</dbReference>
<dbReference type="FunCoup" id="A4IGK4">
    <property type="interactions" value="4440"/>
</dbReference>
<dbReference type="STRING" id="8364.ENSXETP00000052595"/>
<dbReference type="DNASU" id="550032"/>
<dbReference type="GeneID" id="550032"/>
<dbReference type="KEGG" id="xtr:550032"/>
<dbReference type="AGR" id="Xenbase:XB-GENE-494987"/>
<dbReference type="CTD" id="10181"/>
<dbReference type="Xenbase" id="XB-GENE-494987">
    <property type="gene designation" value="rbm5"/>
</dbReference>
<dbReference type="HOGENOM" id="CLU_010527_0_0_1"/>
<dbReference type="InParanoid" id="A4IGK4"/>
<dbReference type="OMA" id="MYDDRSP"/>
<dbReference type="OrthoDB" id="29221at2759"/>
<dbReference type="PhylomeDB" id="A4IGK4"/>
<dbReference type="Proteomes" id="UP000008143">
    <property type="component" value="Chromosome 4"/>
</dbReference>
<dbReference type="Bgee" id="ENSXETG00000007303">
    <property type="expression patterns" value="Expressed in brain and 27 other cell types or tissues"/>
</dbReference>
<dbReference type="ExpressionAtlas" id="A4IGK4">
    <property type="expression patterns" value="baseline"/>
</dbReference>
<dbReference type="GO" id="GO:0005634">
    <property type="term" value="C:nucleus"/>
    <property type="evidence" value="ECO:0000250"/>
    <property type="project" value="UniProtKB"/>
</dbReference>
<dbReference type="GO" id="GO:0005681">
    <property type="term" value="C:spliceosomal complex"/>
    <property type="evidence" value="ECO:0007669"/>
    <property type="project" value="UniProtKB-KW"/>
</dbReference>
<dbReference type="GO" id="GO:0003729">
    <property type="term" value="F:mRNA binding"/>
    <property type="evidence" value="ECO:0000250"/>
    <property type="project" value="UniProtKB"/>
</dbReference>
<dbReference type="GO" id="GO:0008270">
    <property type="term" value="F:zinc ion binding"/>
    <property type="evidence" value="ECO:0007669"/>
    <property type="project" value="UniProtKB-KW"/>
</dbReference>
<dbReference type="GO" id="GO:0043065">
    <property type="term" value="P:positive regulation of apoptotic process"/>
    <property type="evidence" value="ECO:0000250"/>
    <property type="project" value="UniProtKB"/>
</dbReference>
<dbReference type="GO" id="GO:0000381">
    <property type="term" value="P:regulation of alternative mRNA splicing, via spliceosome"/>
    <property type="evidence" value="ECO:0000250"/>
    <property type="project" value="UniProtKB"/>
</dbReference>
<dbReference type="GO" id="GO:0000245">
    <property type="term" value="P:spliceosomal complex assembly"/>
    <property type="evidence" value="ECO:0000250"/>
    <property type="project" value="UniProtKB"/>
</dbReference>
<dbReference type="CDD" id="cd16168">
    <property type="entry name" value="OCRE_RBM5"/>
    <property type="match status" value="1"/>
</dbReference>
<dbReference type="CDD" id="cd12752">
    <property type="entry name" value="RRM1_RBM5"/>
    <property type="match status" value="1"/>
</dbReference>
<dbReference type="CDD" id="cd12755">
    <property type="entry name" value="RRM2_RBM5"/>
    <property type="match status" value="1"/>
</dbReference>
<dbReference type="FunFam" id="3.30.70.330:FF:000110">
    <property type="entry name" value="RNA-binding protein 10 isoform X1"/>
    <property type="match status" value="1"/>
</dbReference>
<dbReference type="FunFam" id="3.30.70.330:FF:000114">
    <property type="entry name" value="RNA-binding protein 10 isoform X1"/>
    <property type="match status" value="1"/>
</dbReference>
<dbReference type="FunFam" id="4.10.1060.10:FF:000005">
    <property type="entry name" value="RNA-binding protein 10 isoform X2"/>
    <property type="match status" value="1"/>
</dbReference>
<dbReference type="Gene3D" id="3.30.70.330">
    <property type="match status" value="2"/>
</dbReference>
<dbReference type="Gene3D" id="4.10.1060.10">
    <property type="entry name" value="Zinc finger, RanBP2-type"/>
    <property type="match status" value="1"/>
</dbReference>
<dbReference type="InterPro" id="IPR000467">
    <property type="entry name" value="G_patch_dom"/>
</dbReference>
<dbReference type="InterPro" id="IPR012677">
    <property type="entry name" value="Nucleotide-bd_a/b_plait_sf"/>
</dbReference>
<dbReference type="InterPro" id="IPR041591">
    <property type="entry name" value="OCRE"/>
</dbReference>
<dbReference type="InterPro" id="IPR035979">
    <property type="entry name" value="RBD_domain_sf"/>
</dbReference>
<dbReference type="InterPro" id="IPR034991">
    <property type="entry name" value="RBM5_RRM1"/>
</dbReference>
<dbReference type="InterPro" id="IPR034993">
    <property type="entry name" value="RBM5_RRM2"/>
</dbReference>
<dbReference type="InterPro" id="IPR000504">
    <property type="entry name" value="RRM_dom"/>
</dbReference>
<dbReference type="InterPro" id="IPR013087">
    <property type="entry name" value="Znf_C2H2_type"/>
</dbReference>
<dbReference type="InterPro" id="IPR001876">
    <property type="entry name" value="Znf_RanBP2"/>
</dbReference>
<dbReference type="InterPro" id="IPR036443">
    <property type="entry name" value="Znf_RanBP2_sf"/>
</dbReference>
<dbReference type="PANTHER" id="PTHR13948">
    <property type="entry name" value="RNA-BINDING PROTEIN"/>
    <property type="match status" value="1"/>
</dbReference>
<dbReference type="PANTHER" id="PTHR13948:SF21">
    <property type="entry name" value="RNA-BINDING PROTEIN 5"/>
    <property type="match status" value="1"/>
</dbReference>
<dbReference type="Pfam" id="PF01585">
    <property type="entry name" value="G-patch"/>
    <property type="match status" value="1"/>
</dbReference>
<dbReference type="Pfam" id="PF17780">
    <property type="entry name" value="OCRE"/>
    <property type="match status" value="1"/>
</dbReference>
<dbReference type="Pfam" id="PF00076">
    <property type="entry name" value="RRM_1"/>
    <property type="match status" value="1"/>
</dbReference>
<dbReference type="Pfam" id="PF00641">
    <property type="entry name" value="Zn_ribbon_RanBP"/>
    <property type="match status" value="1"/>
</dbReference>
<dbReference type="SMART" id="SM00443">
    <property type="entry name" value="G_patch"/>
    <property type="match status" value="1"/>
</dbReference>
<dbReference type="SMART" id="SM00360">
    <property type="entry name" value="RRM"/>
    <property type="match status" value="2"/>
</dbReference>
<dbReference type="SMART" id="SM00547">
    <property type="entry name" value="ZnF_RBZ"/>
    <property type="match status" value="1"/>
</dbReference>
<dbReference type="SUPFAM" id="SSF90209">
    <property type="entry name" value="Ran binding protein zinc finger-like"/>
    <property type="match status" value="1"/>
</dbReference>
<dbReference type="SUPFAM" id="SSF54928">
    <property type="entry name" value="RNA-binding domain, RBD"/>
    <property type="match status" value="2"/>
</dbReference>
<dbReference type="PROSITE" id="PS50174">
    <property type="entry name" value="G_PATCH"/>
    <property type="match status" value="1"/>
</dbReference>
<dbReference type="PROSITE" id="PS50102">
    <property type="entry name" value="RRM"/>
    <property type="match status" value="2"/>
</dbReference>
<dbReference type="PROSITE" id="PS01358">
    <property type="entry name" value="ZF_RANBP2_1"/>
    <property type="match status" value="1"/>
</dbReference>
<dbReference type="PROSITE" id="PS50199">
    <property type="entry name" value="ZF_RANBP2_2"/>
    <property type="match status" value="1"/>
</dbReference>
<dbReference type="PROSITE" id="PS50157">
    <property type="entry name" value="ZINC_FINGER_C2H2_2"/>
    <property type="match status" value="1"/>
</dbReference>
<organism>
    <name type="scientific">Xenopus tropicalis</name>
    <name type="common">Western clawed frog</name>
    <name type="synonym">Silurana tropicalis</name>
    <dbReference type="NCBI Taxonomy" id="8364"/>
    <lineage>
        <taxon>Eukaryota</taxon>
        <taxon>Metazoa</taxon>
        <taxon>Chordata</taxon>
        <taxon>Craniata</taxon>
        <taxon>Vertebrata</taxon>
        <taxon>Euteleostomi</taxon>
        <taxon>Amphibia</taxon>
        <taxon>Batrachia</taxon>
        <taxon>Anura</taxon>
        <taxon>Pipoidea</taxon>
        <taxon>Pipidae</taxon>
        <taxon>Xenopodinae</taxon>
        <taxon>Xenopus</taxon>
        <taxon>Silurana</taxon>
    </lineage>
</organism>